<comment type="function">
    <text evidence="1">Produces ATP from ADP in the presence of a proton gradient across the membrane. The catalytic sites are hosted primarily by the beta subunits.</text>
</comment>
<comment type="catalytic activity">
    <reaction evidence="1">
        <text>ATP + H2O + 4 H(+)(in) = ADP + phosphate + 5 H(+)(out)</text>
        <dbReference type="Rhea" id="RHEA:57720"/>
        <dbReference type="ChEBI" id="CHEBI:15377"/>
        <dbReference type="ChEBI" id="CHEBI:15378"/>
        <dbReference type="ChEBI" id="CHEBI:30616"/>
        <dbReference type="ChEBI" id="CHEBI:43474"/>
        <dbReference type="ChEBI" id="CHEBI:456216"/>
        <dbReference type="EC" id="7.1.2.2"/>
    </reaction>
</comment>
<comment type="subunit">
    <text evidence="1">F-type ATPases have 2 components, CF(1) - the catalytic core - and CF(0) - the membrane proton channel. CF(1) has five subunits: alpha(3), beta(3), gamma(1), delta(1), epsilon(1). CF(0) has three main subunits: a(1), b(2) and c(9-12). The alpha and beta chains form an alternating ring which encloses part of the gamma chain. CF(1) is attached to CF(0) by a central stalk formed by the gamma and epsilon chains, while a peripheral stalk is formed by the delta and b chains.</text>
</comment>
<comment type="subcellular location">
    <subcellularLocation>
        <location evidence="1">Cell membrane</location>
        <topology evidence="1">Peripheral membrane protein</topology>
    </subcellularLocation>
</comment>
<comment type="similarity">
    <text evidence="1">Belongs to the ATPase alpha/beta chains family.</text>
</comment>
<protein>
    <recommendedName>
        <fullName evidence="1">ATP synthase subunit beta</fullName>
        <ecNumber evidence="1">7.1.2.2</ecNumber>
    </recommendedName>
    <alternativeName>
        <fullName evidence="1">ATP synthase F1 sector subunit beta</fullName>
    </alternativeName>
    <alternativeName>
        <fullName evidence="1">F-ATPase subunit beta</fullName>
    </alternativeName>
</protein>
<feature type="chain" id="PRO_1000143475" description="ATP synthase subunit beta">
    <location>
        <begin position="1"/>
        <end position="468"/>
    </location>
</feature>
<feature type="binding site" evidence="1">
    <location>
        <begin position="155"/>
        <end position="162"/>
    </location>
    <ligand>
        <name>ATP</name>
        <dbReference type="ChEBI" id="CHEBI:30616"/>
    </ligand>
</feature>
<dbReference type="EC" id="7.1.2.2" evidence="1"/>
<dbReference type="EMBL" id="CP001176">
    <property type="protein sequence ID" value="ACK59111.1"/>
    <property type="molecule type" value="Genomic_DNA"/>
</dbReference>
<dbReference type="RefSeq" id="WP_001032595.1">
    <property type="nucleotide sequence ID" value="NZ_VEHB01000004.1"/>
</dbReference>
<dbReference type="SMR" id="B7HFK1"/>
<dbReference type="GeneID" id="93005818"/>
<dbReference type="KEGG" id="bcb:BCB4264_A5426"/>
<dbReference type="HOGENOM" id="CLU_022398_0_2_9"/>
<dbReference type="Proteomes" id="UP000007096">
    <property type="component" value="Chromosome"/>
</dbReference>
<dbReference type="GO" id="GO:0005886">
    <property type="term" value="C:plasma membrane"/>
    <property type="evidence" value="ECO:0007669"/>
    <property type="project" value="UniProtKB-SubCell"/>
</dbReference>
<dbReference type="GO" id="GO:0045259">
    <property type="term" value="C:proton-transporting ATP synthase complex"/>
    <property type="evidence" value="ECO:0007669"/>
    <property type="project" value="UniProtKB-KW"/>
</dbReference>
<dbReference type="GO" id="GO:0005524">
    <property type="term" value="F:ATP binding"/>
    <property type="evidence" value="ECO:0007669"/>
    <property type="project" value="UniProtKB-UniRule"/>
</dbReference>
<dbReference type="GO" id="GO:0016887">
    <property type="term" value="F:ATP hydrolysis activity"/>
    <property type="evidence" value="ECO:0007669"/>
    <property type="project" value="InterPro"/>
</dbReference>
<dbReference type="GO" id="GO:0046933">
    <property type="term" value="F:proton-transporting ATP synthase activity, rotational mechanism"/>
    <property type="evidence" value="ECO:0007669"/>
    <property type="project" value="UniProtKB-UniRule"/>
</dbReference>
<dbReference type="CDD" id="cd18110">
    <property type="entry name" value="ATP-synt_F1_beta_C"/>
    <property type="match status" value="1"/>
</dbReference>
<dbReference type="CDD" id="cd18115">
    <property type="entry name" value="ATP-synt_F1_beta_N"/>
    <property type="match status" value="1"/>
</dbReference>
<dbReference type="CDD" id="cd01133">
    <property type="entry name" value="F1-ATPase_beta_CD"/>
    <property type="match status" value="1"/>
</dbReference>
<dbReference type="FunFam" id="1.10.1140.10:FF:000001">
    <property type="entry name" value="ATP synthase subunit beta"/>
    <property type="match status" value="1"/>
</dbReference>
<dbReference type="FunFam" id="2.40.10.170:FF:000005">
    <property type="entry name" value="ATP synthase subunit beta"/>
    <property type="match status" value="1"/>
</dbReference>
<dbReference type="FunFam" id="3.40.50.300:FF:000004">
    <property type="entry name" value="ATP synthase subunit beta"/>
    <property type="match status" value="1"/>
</dbReference>
<dbReference type="Gene3D" id="2.40.10.170">
    <property type="match status" value="1"/>
</dbReference>
<dbReference type="Gene3D" id="1.10.1140.10">
    <property type="entry name" value="Bovine Mitochondrial F1-atpase, Atp Synthase Beta Chain, Chain D, domain 3"/>
    <property type="match status" value="1"/>
</dbReference>
<dbReference type="Gene3D" id="3.40.50.300">
    <property type="entry name" value="P-loop containing nucleotide triphosphate hydrolases"/>
    <property type="match status" value="1"/>
</dbReference>
<dbReference type="HAMAP" id="MF_01347">
    <property type="entry name" value="ATP_synth_beta_bact"/>
    <property type="match status" value="1"/>
</dbReference>
<dbReference type="InterPro" id="IPR003593">
    <property type="entry name" value="AAA+_ATPase"/>
</dbReference>
<dbReference type="InterPro" id="IPR055190">
    <property type="entry name" value="ATP-synt_VA_C"/>
</dbReference>
<dbReference type="InterPro" id="IPR005722">
    <property type="entry name" value="ATP_synth_F1_bsu"/>
</dbReference>
<dbReference type="InterPro" id="IPR020003">
    <property type="entry name" value="ATPase_a/bsu_AS"/>
</dbReference>
<dbReference type="InterPro" id="IPR050053">
    <property type="entry name" value="ATPase_alpha/beta_chains"/>
</dbReference>
<dbReference type="InterPro" id="IPR004100">
    <property type="entry name" value="ATPase_F1/V1/A1_a/bsu_N"/>
</dbReference>
<dbReference type="InterPro" id="IPR036121">
    <property type="entry name" value="ATPase_F1/V1/A1_a/bsu_N_sf"/>
</dbReference>
<dbReference type="InterPro" id="IPR000194">
    <property type="entry name" value="ATPase_F1/V1/A1_a/bsu_nucl-bd"/>
</dbReference>
<dbReference type="InterPro" id="IPR024034">
    <property type="entry name" value="ATPase_F1/V1_b/a_C"/>
</dbReference>
<dbReference type="InterPro" id="IPR027417">
    <property type="entry name" value="P-loop_NTPase"/>
</dbReference>
<dbReference type="NCBIfam" id="TIGR01039">
    <property type="entry name" value="atpD"/>
    <property type="match status" value="1"/>
</dbReference>
<dbReference type="PANTHER" id="PTHR15184">
    <property type="entry name" value="ATP SYNTHASE"/>
    <property type="match status" value="1"/>
</dbReference>
<dbReference type="PANTHER" id="PTHR15184:SF71">
    <property type="entry name" value="ATP SYNTHASE SUBUNIT BETA, MITOCHONDRIAL"/>
    <property type="match status" value="1"/>
</dbReference>
<dbReference type="Pfam" id="PF00006">
    <property type="entry name" value="ATP-synt_ab"/>
    <property type="match status" value="1"/>
</dbReference>
<dbReference type="Pfam" id="PF02874">
    <property type="entry name" value="ATP-synt_ab_N"/>
    <property type="match status" value="1"/>
</dbReference>
<dbReference type="Pfam" id="PF22919">
    <property type="entry name" value="ATP-synt_VA_C"/>
    <property type="match status" value="1"/>
</dbReference>
<dbReference type="SMART" id="SM00382">
    <property type="entry name" value="AAA"/>
    <property type="match status" value="1"/>
</dbReference>
<dbReference type="SUPFAM" id="SSF47917">
    <property type="entry name" value="C-terminal domain of alpha and beta subunits of F1 ATP synthase"/>
    <property type="match status" value="1"/>
</dbReference>
<dbReference type="SUPFAM" id="SSF50615">
    <property type="entry name" value="N-terminal domain of alpha and beta subunits of F1 ATP synthase"/>
    <property type="match status" value="1"/>
</dbReference>
<dbReference type="SUPFAM" id="SSF52540">
    <property type="entry name" value="P-loop containing nucleoside triphosphate hydrolases"/>
    <property type="match status" value="1"/>
</dbReference>
<dbReference type="PROSITE" id="PS00152">
    <property type="entry name" value="ATPASE_ALPHA_BETA"/>
    <property type="match status" value="1"/>
</dbReference>
<gene>
    <name evidence="1" type="primary">atpD</name>
    <name type="ordered locus">BCB4264_A5426</name>
</gene>
<proteinExistence type="inferred from homology"/>
<sequence length="468" mass="51022">MNKGRVTQIMGPVVDVKFDGGKLPEIYNALTVKQSNENGSMNLTFEVALHLGDDTVRTVAMSSTDGLVRGTEVEDTGKAISVPVGDATLGRVFNVLGDAIDLDGELPADVHRDPIHRQAPAFEELSTKVEILETGIKVVDLLAPYIKGGKIGLFGGAGVGKTVLIQELINNIAQEHGGISVFAGVGERTREGNDLYHEMSDSGVIKKTAMVFGQMNEPPGARQRVALTGLTMAEHFRDEQGQDVLLFIDNIFRFTQAGSEVSALLGRMPSAVGYQPTLATEMGQLQERITSTNKGSITSIQAVYVPADDYTDPAPATTFAHLDATTNLERRLTQMGIYPAVDPLASTSRALSPEIVGEEHYEVARQVQQTLQRYKELQDIIAILGMDELSEEDKLVVHRARRIQFFLSQNFHVAEQFTGQKGSYVPVKNTVSGFKEILEGKYDDLPEDAFRLVGGIEEVIENAKKMMA</sequence>
<organism>
    <name type="scientific">Bacillus cereus (strain B4264)</name>
    <dbReference type="NCBI Taxonomy" id="405532"/>
    <lineage>
        <taxon>Bacteria</taxon>
        <taxon>Bacillati</taxon>
        <taxon>Bacillota</taxon>
        <taxon>Bacilli</taxon>
        <taxon>Bacillales</taxon>
        <taxon>Bacillaceae</taxon>
        <taxon>Bacillus</taxon>
        <taxon>Bacillus cereus group</taxon>
    </lineage>
</organism>
<evidence type="ECO:0000255" key="1">
    <source>
        <dbReference type="HAMAP-Rule" id="MF_01347"/>
    </source>
</evidence>
<name>ATPB_BACC4</name>
<reference key="1">
    <citation type="submission" date="2008-10" db="EMBL/GenBank/DDBJ databases">
        <title>Genome sequence of Bacillus cereus B4264.</title>
        <authorList>
            <person name="Dodson R.J."/>
            <person name="Durkin A.S."/>
            <person name="Rosovitz M.J."/>
            <person name="Rasko D.A."/>
            <person name="Hoffmaster A."/>
            <person name="Ravel J."/>
            <person name="Sutton G."/>
        </authorList>
    </citation>
    <scope>NUCLEOTIDE SEQUENCE [LARGE SCALE GENOMIC DNA]</scope>
    <source>
        <strain>B4264</strain>
    </source>
</reference>
<keyword id="KW-0066">ATP synthesis</keyword>
<keyword id="KW-0067">ATP-binding</keyword>
<keyword id="KW-1003">Cell membrane</keyword>
<keyword id="KW-0139">CF(1)</keyword>
<keyword id="KW-0375">Hydrogen ion transport</keyword>
<keyword id="KW-0406">Ion transport</keyword>
<keyword id="KW-0472">Membrane</keyword>
<keyword id="KW-0547">Nucleotide-binding</keyword>
<keyword id="KW-1278">Translocase</keyword>
<keyword id="KW-0813">Transport</keyword>
<accession>B7HFK1</accession>